<evidence type="ECO:0000250" key="1"/>
<evidence type="ECO:0000269" key="2">
    <source>
    </source>
</evidence>
<evidence type="ECO:0000269" key="3">
    <source>
    </source>
</evidence>
<evidence type="ECO:0000305" key="4"/>
<evidence type="ECO:0000305" key="5">
    <source>
    </source>
</evidence>
<gene>
    <name type="primary">sigX</name>
    <name type="synonym">ypuM</name>
    <name type="ordered locus">BSU23100</name>
</gene>
<sequence>MEETFQLLYDTYHQDLYQFLFYMVKDKNQTEDLLQEVYIRVLNSYHTFEGRSSEKTWLLSIARHVAIDWFRKQQTIRQRILGTFDWDTQDVRDQQLLPDELAVQHENVREIYAALDQCTIDQRAVIILRFIQGYSIQETAKALRFSESKVKTTQHRGLKVLRKHMELLREELMDDEVRMERRTDKGVVKSTSGS</sequence>
<feature type="chain" id="PRO_0000094017" description="ECF RNA polymerase sigma factor SigX">
    <location>
        <begin position="1"/>
        <end position="194"/>
    </location>
</feature>
<feature type="DNA-binding region" description="H-T-H motif" evidence="1">
    <location>
        <begin position="136"/>
        <end position="155"/>
    </location>
</feature>
<feature type="short sequence motif" description="Polymerase core binding">
    <location>
        <begin position="32"/>
        <end position="45"/>
    </location>
</feature>
<feature type="sequence conflict" description="In Ref. 1; AAA67499." evidence="4" ref="1">
    <original>YA</original>
    <variation>SC</variation>
    <location>
        <begin position="112"/>
        <end position="113"/>
    </location>
</feature>
<organism>
    <name type="scientific">Bacillus subtilis (strain 168)</name>
    <dbReference type="NCBI Taxonomy" id="224308"/>
    <lineage>
        <taxon>Bacteria</taxon>
        <taxon>Bacillati</taxon>
        <taxon>Bacillota</taxon>
        <taxon>Bacilli</taxon>
        <taxon>Bacillales</taxon>
        <taxon>Bacillaceae</taxon>
        <taxon>Bacillus</taxon>
    </lineage>
</organism>
<reference key="1">
    <citation type="journal article" date="1993" name="Mol. Microbiol.">
        <title>The organization of the Bacillus subtilis 168 chromosome region between the spoVA and serA genetic loci, based on sequence data.</title>
        <authorList>
            <person name="Sorokin A.V."/>
            <person name="Zumstein E."/>
            <person name="Azevedo V."/>
            <person name="Ehrlich S.D."/>
            <person name="Serror P."/>
        </authorList>
    </citation>
    <scope>NUCLEOTIDE SEQUENCE [GENOMIC DNA]</scope>
    <source>
        <strain>168 / Marburg / ATCC 6051 / DSM 10 / JCM 1465 / NBRC 13719 / NCIMB 3610 / NRRL NRS-744 / VKM B-501</strain>
    </source>
</reference>
<reference key="2">
    <citation type="journal article" date="1997" name="Nature">
        <title>The complete genome sequence of the Gram-positive bacterium Bacillus subtilis.</title>
        <authorList>
            <person name="Kunst F."/>
            <person name="Ogasawara N."/>
            <person name="Moszer I."/>
            <person name="Albertini A.M."/>
            <person name="Alloni G."/>
            <person name="Azevedo V."/>
            <person name="Bertero M.G."/>
            <person name="Bessieres P."/>
            <person name="Bolotin A."/>
            <person name="Borchert S."/>
            <person name="Borriss R."/>
            <person name="Boursier L."/>
            <person name="Brans A."/>
            <person name="Braun M."/>
            <person name="Brignell S.C."/>
            <person name="Bron S."/>
            <person name="Brouillet S."/>
            <person name="Bruschi C.V."/>
            <person name="Caldwell B."/>
            <person name="Capuano V."/>
            <person name="Carter N.M."/>
            <person name="Choi S.-K."/>
            <person name="Codani J.-J."/>
            <person name="Connerton I.F."/>
            <person name="Cummings N.J."/>
            <person name="Daniel R.A."/>
            <person name="Denizot F."/>
            <person name="Devine K.M."/>
            <person name="Duesterhoeft A."/>
            <person name="Ehrlich S.D."/>
            <person name="Emmerson P.T."/>
            <person name="Entian K.-D."/>
            <person name="Errington J."/>
            <person name="Fabret C."/>
            <person name="Ferrari E."/>
            <person name="Foulger D."/>
            <person name="Fritz C."/>
            <person name="Fujita M."/>
            <person name="Fujita Y."/>
            <person name="Fuma S."/>
            <person name="Galizzi A."/>
            <person name="Galleron N."/>
            <person name="Ghim S.-Y."/>
            <person name="Glaser P."/>
            <person name="Goffeau A."/>
            <person name="Golightly E.J."/>
            <person name="Grandi G."/>
            <person name="Guiseppi G."/>
            <person name="Guy B.J."/>
            <person name="Haga K."/>
            <person name="Haiech J."/>
            <person name="Harwood C.R."/>
            <person name="Henaut A."/>
            <person name="Hilbert H."/>
            <person name="Holsappel S."/>
            <person name="Hosono S."/>
            <person name="Hullo M.-F."/>
            <person name="Itaya M."/>
            <person name="Jones L.-M."/>
            <person name="Joris B."/>
            <person name="Karamata D."/>
            <person name="Kasahara Y."/>
            <person name="Klaerr-Blanchard M."/>
            <person name="Klein C."/>
            <person name="Kobayashi Y."/>
            <person name="Koetter P."/>
            <person name="Koningstein G."/>
            <person name="Krogh S."/>
            <person name="Kumano M."/>
            <person name="Kurita K."/>
            <person name="Lapidus A."/>
            <person name="Lardinois S."/>
            <person name="Lauber J."/>
            <person name="Lazarevic V."/>
            <person name="Lee S.-M."/>
            <person name="Levine A."/>
            <person name="Liu H."/>
            <person name="Masuda S."/>
            <person name="Mauel C."/>
            <person name="Medigue C."/>
            <person name="Medina N."/>
            <person name="Mellado R.P."/>
            <person name="Mizuno M."/>
            <person name="Moestl D."/>
            <person name="Nakai S."/>
            <person name="Noback M."/>
            <person name="Noone D."/>
            <person name="O'Reilly M."/>
            <person name="Ogawa K."/>
            <person name="Ogiwara A."/>
            <person name="Oudega B."/>
            <person name="Park S.-H."/>
            <person name="Parro V."/>
            <person name="Pohl T.M."/>
            <person name="Portetelle D."/>
            <person name="Porwollik S."/>
            <person name="Prescott A.M."/>
            <person name="Presecan E."/>
            <person name="Pujic P."/>
            <person name="Purnelle B."/>
            <person name="Rapoport G."/>
            <person name="Rey M."/>
            <person name="Reynolds S."/>
            <person name="Rieger M."/>
            <person name="Rivolta C."/>
            <person name="Rocha E."/>
            <person name="Roche B."/>
            <person name="Rose M."/>
            <person name="Sadaie Y."/>
            <person name="Sato T."/>
            <person name="Scanlan E."/>
            <person name="Schleich S."/>
            <person name="Schroeter R."/>
            <person name="Scoffone F."/>
            <person name="Sekiguchi J."/>
            <person name="Sekowska A."/>
            <person name="Seror S.J."/>
            <person name="Serror P."/>
            <person name="Shin B.-S."/>
            <person name="Soldo B."/>
            <person name="Sorokin A."/>
            <person name="Tacconi E."/>
            <person name="Takagi T."/>
            <person name="Takahashi H."/>
            <person name="Takemaru K."/>
            <person name="Takeuchi M."/>
            <person name="Tamakoshi A."/>
            <person name="Tanaka T."/>
            <person name="Terpstra P."/>
            <person name="Tognoni A."/>
            <person name="Tosato V."/>
            <person name="Uchiyama S."/>
            <person name="Vandenbol M."/>
            <person name="Vannier F."/>
            <person name="Vassarotti A."/>
            <person name="Viari A."/>
            <person name="Wambutt R."/>
            <person name="Wedler E."/>
            <person name="Wedler H."/>
            <person name="Weitzenegger T."/>
            <person name="Winters P."/>
            <person name="Wipat A."/>
            <person name="Yamamoto H."/>
            <person name="Yamane K."/>
            <person name="Yasumoto K."/>
            <person name="Yata K."/>
            <person name="Yoshida K."/>
            <person name="Yoshikawa H.-F."/>
            <person name="Zumstein E."/>
            <person name="Yoshikawa H."/>
            <person name="Danchin A."/>
        </authorList>
    </citation>
    <scope>NUCLEOTIDE SEQUENCE [LARGE SCALE GENOMIC DNA]</scope>
    <source>
        <strain>168</strain>
    </source>
</reference>
<reference key="3">
    <citation type="journal article" date="2009" name="Microbiology">
        <title>From a consortium sequence to a unified sequence: the Bacillus subtilis 168 reference genome a decade later.</title>
        <authorList>
            <person name="Barbe V."/>
            <person name="Cruveiller S."/>
            <person name="Kunst F."/>
            <person name="Lenoble P."/>
            <person name="Meurice G."/>
            <person name="Sekowska A."/>
            <person name="Vallenet D."/>
            <person name="Wang T."/>
            <person name="Moszer I."/>
            <person name="Medigue C."/>
            <person name="Danchin A."/>
        </authorList>
    </citation>
    <scope>SEQUENCE REVISION TO 112-113</scope>
</reference>
<reference key="4">
    <citation type="journal article" date="1994" name="Proc. Natl. Acad. Sci. U.S.A.">
        <title>Analysis of the Streptomyces coelicolor sigE gene reveals the existence of a subfamily of eubacterial RNA polymerase sigma factors involved in the regulation of extracytoplasmic functions.</title>
        <authorList>
            <person name="Lonetto M.A."/>
            <person name="Brown K.L."/>
            <person name="Rudd K.E."/>
            <person name="Buttner M.J."/>
        </authorList>
    </citation>
    <scope>POSSIBLE FUNCTION</scope>
</reference>
<reference key="5">
    <citation type="journal article" date="1997" name="Mol. Gen. Genet.">
        <title>SigX of Bacillus subtilis replaces the ECF sigma factor fecI of Escherichia coli and is inhibited by RsiX.</title>
        <authorList>
            <person name="Brutsche S."/>
            <person name="Braun V."/>
        </authorList>
    </citation>
    <scope>CHARACTERIZATION</scope>
</reference>
<reference key="6">
    <citation type="journal article" date="2011" name="Proteomics">
        <title>The dynamic protein partnership of RNA polymerase in Bacillus subtilis.</title>
        <authorList>
            <person name="Delumeau O."/>
            <person name="Lecointe F."/>
            <person name="Muntel J."/>
            <person name="Guillot A."/>
            <person name="Guedon E."/>
            <person name="Monnet V."/>
            <person name="Hecker M."/>
            <person name="Becher D."/>
            <person name="Polard P."/>
            <person name="Noirot P."/>
        </authorList>
    </citation>
    <scope>FUNCTION</scope>
    <scope>SUBUNIT</scope>
    <scope>INDUCTION</scope>
    <source>
        <strain>168</strain>
    </source>
</reference>
<reference key="7">
    <citation type="journal article" date="2012" name="Mol. Microbiol.">
        <title>Analysis of the role of Bacillus subtilis sigma(M) in beta-lactam resistance reveals an essential role for c-di-AMP in peptidoglycan homeostasis.</title>
        <authorList>
            <person name="Luo Y."/>
            <person name="Helmann J.D."/>
        </authorList>
    </citation>
    <scope>INDUCTION</scope>
    <scope>DISRUPTION PHENOTYPE</scope>
    <source>
        <strain>168</strain>
    </source>
</reference>
<keyword id="KW-1003">Cell membrane</keyword>
<keyword id="KW-0238">DNA-binding</keyword>
<keyword id="KW-0472">Membrane</keyword>
<keyword id="KW-1185">Reference proteome</keyword>
<keyword id="KW-0731">Sigma factor</keyword>
<keyword id="KW-0804">Transcription</keyword>
<keyword id="KW-0805">Transcription regulation</keyword>
<proteinExistence type="evidence at protein level"/>
<dbReference type="EMBL" id="L09228">
    <property type="protein sequence ID" value="AAA67499.1"/>
    <property type="molecule type" value="Genomic_DNA"/>
</dbReference>
<dbReference type="EMBL" id="AL009126">
    <property type="protein sequence ID" value="CAB14242.2"/>
    <property type="molecule type" value="Genomic_DNA"/>
</dbReference>
<dbReference type="PIR" id="S45561">
    <property type="entry name" value="S45561"/>
</dbReference>
<dbReference type="RefSeq" id="NP_390191.2">
    <property type="nucleotide sequence ID" value="NC_000964.3"/>
</dbReference>
<dbReference type="RefSeq" id="WP_003230521.1">
    <property type="nucleotide sequence ID" value="NZ_OZ025638.1"/>
</dbReference>
<dbReference type="SMR" id="P35165"/>
<dbReference type="FunCoup" id="P35165">
    <property type="interactions" value="29"/>
</dbReference>
<dbReference type="IntAct" id="P35165">
    <property type="interactions" value="1"/>
</dbReference>
<dbReference type="STRING" id="224308.BSU23100"/>
<dbReference type="PaxDb" id="224308-BSU23100"/>
<dbReference type="EnsemblBacteria" id="CAB14242">
    <property type="protein sequence ID" value="CAB14242"/>
    <property type="gene ID" value="BSU_23100"/>
</dbReference>
<dbReference type="GeneID" id="938966"/>
<dbReference type="KEGG" id="bsu:BSU23100"/>
<dbReference type="eggNOG" id="COG1595">
    <property type="taxonomic scope" value="Bacteria"/>
</dbReference>
<dbReference type="InParanoid" id="P35165"/>
<dbReference type="OrthoDB" id="9794508at2"/>
<dbReference type="PhylomeDB" id="P35165"/>
<dbReference type="BioCyc" id="BSUB:BSU23100-MONOMER"/>
<dbReference type="Proteomes" id="UP000001570">
    <property type="component" value="Chromosome"/>
</dbReference>
<dbReference type="GO" id="GO:0005886">
    <property type="term" value="C:plasma membrane"/>
    <property type="evidence" value="ECO:0007669"/>
    <property type="project" value="UniProtKB-SubCell"/>
</dbReference>
<dbReference type="GO" id="GO:0003677">
    <property type="term" value="F:DNA binding"/>
    <property type="evidence" value="ECO:0007669"/>
    <property type="project" value="UniProtKB-KW"/>
</dbReference>
<dbReference type="GO" id="GO:0016987">
    <property type="term" value="F:sigma factor activity"/>
    <property type="evidence" value="ECO:0000318"/>
    <property type="project" value="GO_Central"/>
</dbReference>
<dbReference type="GO" id="GO:0006352">
    <property type="term" value="P:DNA-templated transcription initiation"/>
    <property type="evidence" value="ECO:0007669"/>
    <property type="project" value="InterPro"/>
</dbReference>
<dbReference type="GO" id="GO:0006355">
    <property type="term" value="P:regulation of DNA-templated transcription"/>
    <property type="evidence" value="ECO:0000318"/>
    <property type="project" value="GO_Central"/>
</dbReference>
<dbReference type="GO" id="GO:0006950">
    <property type="term" value="P:response to stress"/>
    <property type="evidence" value="ECO:0007669"/>
    <property type="project" value="UniProtKB-ARBA"/>
</dbReference>
<dbReference type="CDD" id="cd06171">
    <property type="entry name" value="Sigma70_r4"/>
    <property type="match status" value="1"/>
</dbReference>
<dbReference type="Gene3D" id="1.10.1740.10">
    <property type="match status" value="1"/>
</dbReference>
<dbReference type="Gene3D" id="1.10.10.10">
    <property type="entry name" value="Winged helix-like DNA-binding domain superfamily/Winged helix DNA-binding domain"/>
    <property type="match status" value="1"/>
</dbReference>
<dbReference type="InterPro" id="IPR039425">
    <property type="entry name" value="RNA_pol_sigma-70-like"/>
</dbReference>
<dbReference type="InterPro" id="IPR014284">
    <property type="entry name" value="RNA_pol_sigma-70_dom"/>
</dbReference>
<dbReference type="InterPro" id="IPR000838">
    <property type="entry name" value="RNA_pol_sigma70_ECF_CS"/>
</dbReference>
<dbReference type="InterPro" id="IPR007627">
    <property type="entry name" value="RNA_pol_sigma70_r2"/>
</dbReference>
<dbReference type="InterPro" id="IPR013249">
    <property type="entry name" value="RNA_pol_sigma70_r4_t2"/>
</dbReference>
<dbReference type="InterPro" id="IPR013325">
    <property type="entry name" value="RNA_pol_sigma_r2"/>
</dbReference>
<dbReference type="InterPro" id="IPR013324">
    <property type="entry name" value="RNA_pol_sigma_r3/r4-like"/>
</dbReference>
<dbReference type="InterPro" id="IPR036388">
    <property type="entry name" value="WH-like_DNA-bd_sf"/>
</dbReference>
<dbReference type="NCBIfam" id="NF007217">
    <property type="entry name" value="PRK09639.1-1"/>
    <property type="match status" value="1"/>
</dbReference>
<dbReference type="NCBIfam" id="TIGR02937">
    <property type="entry name" value="sigma70-ECF"/>
    <property type="match status" value="1"/>
</dbReference>
<dbReference type="PANTHER" id="PTHR43133">
    <property type="entry name" value="RNA POLYMERASE ECF-TYPE SIGMA FACTO"/>
    <property type="match status" value="1"/>
</dbReference>
<dbReference type="PANTHER" id="PTHR43133:SF60">
    <property type="entry name" value="RNA POLYMERASE SIGMA FACTOR SIGV"/>
    <property type="match status" value="1"/>
</dbReference>
<dbReference type="Pfam" id="PF04542">
    <property type="entry name" value="Sigma70_r2"/>
    <property type="match status" value="1"/>
</dbReference>
<dbReference type="Pfam" id="PF08281">
    <property type="entry name" value="Sigma70_r4_2"/>
    <property type="match status" value="1"/>
</dbReference>
<dbReference type="SUPFAM" id="SSF88946">
    <property type="entry name" value="Sigma2 domain of RNA polymerase sigma factors"/>
    <property type="match status" value="1"/>
</dbReference>
<dbReference type="SUPFAM" id="SSF88659">
    <property type="entry name" value="Sigma3 and sigma4 domains of RNA polymerase sigma factors"/>
    <property type="match status" value="1"/>
</dbReference>
<dbReference type="PROSITE" id="PS01063">
    <property type="entry name" value="SIGMA70_ECF"/>
    <property type="match status" value="1"/>
</dbReference>
<protein>
    <recommendedName>
        <fullName>ECF RNA polymerase sigma factor SigX</fullName>
        <shortName>ECF sigma factor SigX</shortName>
    </recommendedName>
</protein>
<comment type="function">
    <text evidence="2">Sigma factors are initiation factors that promote the attachment of RNA polymerase (RNAP) to specific initiation sites and are then released. May be involved in the regulation of iron metabolism. Associates with RNAP core during early growth phases, association decreases as cells age (PubMed:21710567).</text>
</comment>
<comment type="subunit">
    <text evidence="5">Interacts transiently with the RNAP core.</text>
</comment>
<comment type="subcellular location">
    <subcellularLocation>
        <location>Cell membrane</location>
        <topology>Peripheral membrane protein</topology>
    </subcellularLocation>
</comment>
<comment type="induction">
    <text evidence="3">Induced 3-fold by the beta-lactam antibiotic cefuroxime.</text>
</comment>
<comment type="disruption phenotype">
    <text evidence="2 3">No effect on antibiotic resistance; double sigM-sigX mutants have 130-fold increases sensitivity to the beta-lactam antibiotic cefuroxime (PubMed:22211522). Association with RNAP core increases during many stresses (at protein level) (PubMed:21710567).</text>
</comment>
<comment type="similarity">
    <text evidence="4">Belongs to the sigma-70 factor family. ECF subfamily.</text>
</comment>
<name>SIGX_BACSU</name>
<accession>P35165</accession>